<name>SOSB1_BOVIN</name>
<feature type="chain" id="PRO_0000333959" description="SOSS complex subunit B1">
    <location>
        <begin position="1"/>
        <end position="211"/>
    </location>
</feature>
<feature type="DNA-binding region" description="OB">
    <location>
        <begin position="22"/>
        <end position="92"/>
    </location>
</feature>
<feature type="region of interest" description="Disordered" evidence="3">
    <location>
        <begin position="110"/>
        <end position="211"/>
    </location>
</feature>
<feature type="compositionally biased region" description="Polar residues" evidence="3">
    <location>
        <begin position="115"/>
        <end position="128"/>
    </location>
</feature>
<feature type="compositionally biased region" description="Pro residues" evidence="3">
    <location>
        <begin position="133"/>
        <end position="143"/>
    </location>
</feature>
<feature type="compositionally biased region" description="Pro residues" evidence="3">
    <location>
        <begin position="165"/>
        <end position="174"/>
    </location>
</feature>
<protein>
    <recommendedName>
        <fullName>SOSS complex subunit B1</fullName>
    </recommendedName>
    <alternativeName>
        <fullName>Nucleic acid-binding protein 2</fullName>
    </alternativeName>
    <alternativeName>
        <fullName>Oligonucleotide/oligosaccharide-binding fold-containing protein 2B</fullName>
    </alternativeName>
    <alternativeName>
        <fullName>Sensor of single-strand DNA complex subunit B1</fullName>
    </alternativeName>
    <alternativeName>
        <fullName>Sensor of ssDNA subunit B1</fullName>
        <shortName>SOSS-B1</shortName>
    </alternativeName>
    <alternativeName>
        <fullName>Single-stranded DNA-binding protein 1</fullName>
    </alternativeName>
</protein>
<evidence type="ECO:0000250" key="1"/>
<evidence type="ECO:0000250" key="2">
    <source>
        <dbReference type="UniProtKB" id="Q9BQ15"/>
    </source>
</evidence>
<evidence type="ECO:0000256" key="3">
    <source>
        <dbReference type="SAM" id="MobiDB-lite"/>
    </source>
</evidence>
<evidence type="ECO:0000305" key="4"/>
<keyword id="KW-0227">DNA damage</keyword>
<keyword id="KW-0234">DNA repair</keyword>
<keyword id="KW-0238">DNA-binding</keyword>
<keyword id="KW-0539">Nucleus</keyword>
<keyword id="KW-1185">Reference proteome</keyword>
<keyword id="KW-0832">Ubl conjugation</keyword>
<sequence>MTTETFVKDIKPGLKNLNLIFIVLETGRVTKTKDGHEVRTCKVADKTGSINISVWDDVGNLIQPGDIIRLTKGYASVFKGCLTLYTGRGGDLQKIGEFCMVYSEVPNFSEPNPEYSAQQAPNKTVQNDSGPAAPQPPTGPPATSPASESQNGNGLSAPPGSGGGPHPPHTPSHPPSTRITRSQPNHTAAGPPGPSNNPVSNGKETRRSSKR</sequence>
<organism>
    <name type="scientific">Bos taurus</name>
    <name type="common">Bovine</name>
    <dbReference type="NCBI Taxonomy" id="9913"/>
    <lineage>
        <taxon>Eukaryota</taxon>
        <taxon>Metazoa</taxon>
        <taxon>Chordata</taxon>
        <taxon>Craniata</taxon>
        <taxon>Vertebrata</taxon>
        <taxon>Euteleostomi</taxon>
        <taxon>Mammalia</taxon>
        <taxon>Eutheria</taxon>
        <taxon>Laurasiatheria</taxon>
        <taxon>Artiodactyla</taxon>
        <taxon>Ruminantia</taxon>
        <taxon>Pecora</taxon>
        <taxon>Bovidae</taxon>
        <taxon>Bovinae</taxon>
        <taxon>Bos</taxon>
    </lineage>
</organism>
<proteinExistence type="evidence at transcript level"/>
<dbReference type="EMBL" id="BC147994">
    <property type="protein sequence ID" value="AAI47995.1"/>
    <property type="molecule type" value="mRNA"/>
</dbReference>
<dbReference type="RefSeq" id="NP_001094621.1">
    <property type="nucleotide sequence ID" value="NM_001101151.1"/>
</dbReference>
<dbReference type="RefSeq" id="XP_005206696.1">
    <property type="nucleotide sequence ID" value="XM_005206639.4"/>
</dbReference>
<dbReference type="RefSeq" id="XP_005206697.1">
    <property type="nucleotide sequence ID" value="XM_005206640.5"/>
</dbReference>
<dbReference type="RefSeq" id="XP_005206698.1">
    <property type="nucleotide sequence ID" value="XM_005206641.4"/>
</dbReference>
<dbReference type="SMR" id="A6QLK2"/>
<dbReference type="FunCoup" id="A6QLK2">
    <property type="interactions" value="2205"/>
</dbReference>
<dbReference type="STRING" id="9913.ENSBTAP00000041786"/>
<dbReference type="PaxDb" id="9913-ENSBTAP00000041786"/>
<dbReference type="Ensembl" id="ENSBTAT00000044279.4">
    <property type="protein sequence ID" value="ENSBTAP00000041786.2"/>
    <property type="gene ID" value="ENSBTAG00000002798.6"/>
</dbReference>
<dbReference type="GeneID" id="533842"/>
<dbReference type="KEGG" id="bta:533842"/>
<dbReference type="CTD" id="79035"/>
<dbReference type="VEuPathDB" id="HostDB:ENSBTAG00000002798"/>
<dbReference type="VGNC" id="VGNC:31860">
    <property type="gene designation" value="NABP2"/>
</dbReference>
<dbReference type="eggNOG" id="KOG3416">
    <property type="taxonomic scope" value="Eukaryota"/>
</dbReference>
<dbReference type="GeneTree" id="ENSGT00940000161079"/>
<dbReference type="HOGENOM" id="CLU_102724_0_1_1"/>
<dbReference type="InParanoid" id="A6QLK2"/>
<dbReference type="OMA" id="QSKAAQN"/>
<dbReference type="OrthoDB" id="295715at2759"/>
<dbReference type="TreeFam" id="TF313902"/>
<dbReference type="Reactome" id="R-BTA-6807505">
    <property type="pathway name" value="RNA polymerase II transcribes snRNA genes"/>
</dbReference>
<dbReference type="Proteomes" id="UP000009136">
    <property type="component" value="Chromosome 5"/>
</dbReference>
<dbReference type="Bgee" id="ENSBTAG00000002798">
    <property type="expression patterns" value="Expressed in gluteus medius and 105 other cell types or tissues"/>
</dbReference>
<dbReference type="GO" id="GO:0005634">
    <property type="term" value="C:nucleus"/>
    <property type="evidence" value="ECO:0000250"/>
    <property type="project" value="UniProtKB"/>
</dbReference>
<dbReference type="GO" id="GO:0070876">
    <property type="term" value="C:SOSS complex"/>
    <property type="evidence" value="ECO:0000250"/>
    <property type="project" value="UniProtKB"/>
</dbReference>
<dbReference type="GO" id="GO:0003677">
    <property type="term" value="F:DNA binding"/>
    <property type="evidence" value="ECO:0000318"/>
    <property type="project" value="GO_Central"/>
</dbReference>
<dbReference type="GO" id="GO:0003697">
    <property type="term" value="F:single-stranded DNA binding"/>
    <property type="evidence" value="ECO:0000250"/>
    <property type="project" value="UniProtKB"/>
</dbReference>
<dbReference type="GO" id="GO:0006974">
    <property type="term" value="P:DNA damage response"/>
    <property type="evidence" value="ECO:0000250"/>
    <property type="project" value="UniProtKB"/>
</dbReference>
<dbReference type="GO" id="GO:0006281">
    <property type="term" value="P:DNA repair"/>
    <property type="evidence" value="ECO:0000250"/>
    <property type="project" value="UniProtKB"/>
</dbReference>
<dbReference type="GO" id="GO:0000724">
    <property type="term" value="P:double-strand break repair via homologous recombination"/>
    <property type="evidence" value="ECO:0000250"/>
    <property type="project" value="UniProtKB"/>
</dbReference>
<dbReference type="GO" id="GO:0044818">
    <property type="term" value="P:mitotic G2/M transition checkpoint"/>
    <property type="evidence" value="ECO:0000250"/>
    <property type="project" value="UniProtKB"/>
</dbReference>
<dbReference type="GO" id="GO:0010212">
    <property type="term" value="P:response to ionizing radiation"/>
    <property type="evidence" value="ECO:0000250"/>
    <property type="project" value="UniProtKB"/>
</dbReference>
<dbReference type="CDD" id="cd04491">
    <property type="entry name" value="SoSSB_OBF"/>
    <property type="match status" value="1"/>
</dbReference>
<dbReference type="FunFam" id="2.40.50.140:FF:000072">
    <property type="entry name" value="SOSS complex subunit B2"/>
    <property type="match status" value="1"/>
</dbReference>
<dbReference type="Gene3D" id="2.40.50.140">
    <property type="entry name" value="Nucleic acid-binding proteins"/>
    <property type="match status" value="1"/>
</dbReference>
<dbReference type="InterPro" id="IPR012340">
    <property type="entry name" value="NA-bd_OB-fold"/>
</dbReference>
<dbReference type="InterPro" id="IPR051231">
    <property type="entry name" value="SOSS-B"/>
</dbReference>
<dbReference type="InterPro" id="IPR048970">
    <property type="entry name" value="Ssb-like_OB"/>
</dbReference>
<dbReference type="PANTHER" id="PTHR13356">
    <property type="entry name" value="OB FOLD NUCLEIC ACID BINDING PROTEIN-RELATED"/>
    <property type="match status" value="1"/>
</dbReference>
<dbReference type="PANTHER" id="PTHR13356:SF3">
    <property type="entry name" value="SOSS COMPLEX SUBUNIT B1"/>
    <property type="match status" value="1"/>
</dbReference>
<dbReference type="Pfam" id="PF21473">
    <property type="entry name" value="Ssb-like_OB"/>
    <property type="match status" value="1"/>
</dbReference>
<dbReference type="SUPFAM" id="SSF50249">
    <property type="entry name" value="Nucleic acid-binding proteins"/>
    <property type="match status" value="1"/>
</dbReference>
<gene>
    <name type="primary">NABP2</name>
    <name type="synonym">OBFC2B</name>
    <name type="synonym">SSB1</name>
</gene>
<comment type="function">
    <text evidence="2">Component of the SOSS complex, a multiprotein complex that functions downstream of the MRN complex to promote DNA repair and G2/M checkpoint. In the SOSS complex, acts as a sensor of single-stranded DNA that binds to single-stranded DNA, in particular to polypyrimidines. The SOSS complex associates with DNA lesions and influences diverse endpoints in the cellular DNA damage response including cell-cycle checkpoint activation, recombinational repair and maintenance of genomic stability. Required for efficient homologous recombination-dependent repair of double-strand breaks (DSBs) and ATM-dependent signaling pathways (By similarity).</text>
</comment>
<comment type="subunit">
    <text evidence="2">Component of the SOSS complex, composed of SOSS-B (SOSS-B1/NABP2 or SOSS-B2/NABP1), SOSS-A/INTS3 and SOSS-C/INIP. SOSS complexes containing SOSS-B1/NABP2 are more abundant than complexes containing SOSS-B2/NABP1. Directly interacts with ATM, SOSS-A/INTS3 and RAD51. Interacts with INTS7 (By similarity).</text>
</comment>
<comment type="subcellular location">
    <subcellularLocation>
        <location evidence="1">Nucleus</location>
    </subcellularLocation>
    <text evidence="2">Localizes to nuclear foci following DNA damage. Foci formation is not cell-cycle dependent. Partial colocalization with RAD51 after ionizing radiation treatment (By similarity).</text>
</comment>
<comment type="PTM">
    <text evidence="2">Phosphorylated by ATM in response to DNA damage. Phosphorylation prevents degradation by the proteasome, hence stabilization of the protein and accumulation within cells (By similarity).</text>
</comment>
<comment type="PTM">
    <text evidence="2">Ubiquitinated in a FBXL5-dependent manner, leading to proteasomal degradation.</text>
</comment>
<comment type="similarity">
    <text evidence="4">Belongs to the SOSS-B family. SOSS-B1 subfamily.</text>
</comment>
<accession>A6QLK2</accession>
<reference key="1">
    <citation type="submission" date="2007-06" db="EMBL/GenBank/DDBJ databases">
        <authorList>
            <consortium name="NIH - Mammalian Gene Collection (MGC) project"/>
        </authorList>
    </citation>
    <scope>NUCLEOTIDE SEQUENCE [LARGE SCALE MRNA]</scope>
    <source>
        <strain>Hereford</strain>
        <tissue>Basal ganglia</tissue>
    </source>
</reference>